<dbReference type="EMBL" id="AK154909">
    <property type="protein sequence ID" value="BAE32919.1"/>
    <property type="molecule type" value="mRNA"/>
</dbReference>
<dbReference type="EMBL" id="AL669837">
    <property type="status" value="NOT_ANNOTATED_CDS"/>
    <property type="molecule type" value="Genomic_DNA"/>
</dbReference>
<dbReference type="CCDS" id="CCDS24431.1"/>
<dbReference type="RefSeq" id="NP_001033017.1">
    <property type="nucleotide sequence ID" value="NM_001037928.3"/>
</dbReference>
<dbReference type="FunCoup" id="Q5SS90">
    <property type="interactions" value="4"/>
</dbReference>
<dbReference type="GlyGen" id="Q5SS90">
    <property type="glycosylation" value="1 site"/>
</dbReference>
<dbReference type="iPTMnet" id="Q5SS90"/>
<dbReference type="PhosphoSitePlus" id="Q5SS90"/>
<dbReference type="PaxDb" id="10090-ENSMUSP00000039806"/>
<dbReference type="ProteomicsDB" id="281550"/>
<dbReference type="Antibodypedia" id="7300">
    <property type="antibodies" value="59 antibodies from 13 providers"/>
</dbReference>
<dbReference type="Ensembl" id="ENSMUST00000043285.5">
    <property type="protein sequence ID" value="ENSMUSP00000039806.5"/>
    <property type="gene ID" value="ENSMUSG00000040978.5"/>
</dbReference>
<dbReference type="GeneID" id="626870"/>
<dbReference type="KEGG" id="mmu:626870"/>
<dbReference type="UCSC" id="uc007hzv.1">
    <property type="organism name" value="mouse"/>
</dbReference>
<dbReference type="AGR" id="MGI:3651127"/>
<dbReference type="MGI" id="MGI:3651127">
    <property type="gene designation" value="Gm11992"/>
</dbReference>
<dbReference type="VEuPathDB" id="HostDB:ENSMUSG00000040978"/>
<dbReference type="eggNOG" id="ENOG502S6DP">
    <property type="taxonomic scope" value="Eukaryota"/>
</dbReference>
<dbReference type="GeneTree" id="ENSGT00390000014376"/>
<dbReference type="HOGENOM" id="CLU_066025_0_0_1"/>
<dbReference type="InParanoid" id="Q5SS90"/>
<dbReference type="OMA" id="MVYEEFH"/>
<dbReference type="OrthoDB" id="10012494at2759"/>
<dbReference type="PhylomeDB" id="Q5SS90"/>
<dbReference type="TreeFam" id="TF330795"/>
<dbReference type="BioGRID-ORCS" id="626870">
    <property type="hits" value="1 hit in 69 CRISPR screens"/>
</dbReference>
<dbReference type="PRO" id="PR:Q5SS90"/>
<dbReference type="Proteomes" id="UP000000589">
    <property type="component" value="Chromosome 11"/>
</dbReference>
<dbReference type="RNAct" id="Q5SS90">
    <property type="molecule type" value="protein"/>
</dbReference>
<dbReference type="Bgee" id="ENSMUSG00000040978">
    <property type="expression patterns" value="Expressed in olfactory epithelium and 75 other cell types or tissues"/>
</dbReference>
<dbReference type="ExpressionAtlas" id="Q5SS90">
    <property type="expression patterns" value="baseline and differential"/>
</dbReference>
<dbReference type="InterPro" id="IPR040247">
    <property type="entry name" value="DUF5524"/>
</dbReference>
<dbReference type="PANTHER" id="PTHR31097:SF2">
    <property type="entry name" value="CHROMOSOME 7 OPEN READING FRAME 57"/>
    <property type="match status" value="1"/>
</dbReference>
<dbReference type="PANTHER" id="PTHR31097">
    <property type="entry name" value="SI:DKEY-276J7.1"/>
    <property type="match status" value="1"/>
</dbReference>
<dbReference type="Pfam" id="PF17662">
    <property type="entry name" value="DUF5524"/>
    <property type="match status" value="1"/>
</dbReference>
<evidence type="ECO:0000256" key="1">
    <source>
        <dbReference type="SAM" id="MobiDB-lite"/>
    </source>
</evidence>
<evidence type="ECO:0007744" key="2">
    <source>
    </source>
</evidence>
<sequence length="291" mass="32895">MRNTSKEVQSTSYRYAPCDWYYHLPVKRSEKPVGAPPASQIPGLSDLRDSPNVNLPRARRYWIKETDSEYVKLAKQGGRPDLLKHFAPGTRQGSPVAYSLPDWYIHHSKPPTSHQREVPVVSIPDYMVYEEFNPDQANGSYESRQGPFDFDRKTIWQREAEELENVKRKVKLPAINSKNPSKTGTPVSHKEPERSRLSLPPMPGQKNSSPTNFSKLISNGYKDEWLQQQKAEADRRTPKTSRASVSSKSTEDSKSNQDTETPENPETPEGSEKTPDAEVSSPSESTPAELK</sequence>
<keyword id="KW-0597">Phosphoprotein</keyword>
<keyword id="KW-1185">Reference proteome</keyword>
<accession>Q5SS90</accession>
<organism>
    <name type="scientific">Mus musculus</name>
    <name type="common">Mouse</name>
    <dbReference type="NCBI Taxonomy" id="10090"/>
    <lineage>
        <taxon>Eukaryota</taxon>
        <taxon>Metazoa</taxon>
        <taxon>Chordata</taxon>
        <taxon>Craniata</taxon>
        <taxon>Vertebrata</taxon>
        <taxon>Euteleostomi</taxon>
        <taxon>Mammalia</taxon>
        <taxon>Eutheria</taxon>
        <taxon>Euarchontoglires</taxon>
        <taxon>Glires</taxon>
        <taxon>Rodentia</taxon>
        <taxon>Myomorpha</taxon>
        <taxon>Muroidea</taxon>
        <taxon>Muridae</taxon>
        <taxon>Murinae</taxon>
        <taxon>Mus</taxon>
        <taxon>Mus</taxon>
    </lineage>
</organism>
<feature type="chain" id="PRO_0000310992" description="Uncharacterized protein C7orf57 homolog">
    <location>
        <begin position="1"/>
        <end position="291"/>
    </location>
</feature>
<feature type="region of interest" description="Disordered" evidence="1">
    <location>
        <begin position="29"/>
        <end position="50"/>
    </location>
</feature>
<feature type="region of interest" description="Disordered" evidence="1">
    <location>
        <begin position="168"/>
        <end position="291"/>
    </location>
</feature>
<feature type="compositionally biased region" description="Polar residues" evidence="1">
    <location>
        <begin position="176"/>
        <end position="186"/>
    </location>
</feature>
<feature type="compositionally biased region" description="Polar residues" evidence="1">
    <location>
        <begin position="205"/>
        <end position="217"/>
    </location>
</feature>
<feature type="compositionally biased region" description="Basic and acidic residues" evidence="1">
    <location>
        <begin position="221"/>
        <end position="237"/>
    </location>
</feature>
<feature type="compositionally biased region" description="Polar residues" evidence="1">
    <location>
        <begin position="280"/>
        <end position="291"/>
    </location>
</feature>
<feature type="modified residue" description="Phosphoserine" evidence="2">
    <location>
        <position position="50"/>
    </location>
</feature>
<reference key="1">
    <citation type="journal article" date="2005" name="Science">
        <title>The transcriptional landscape of the mammalian genome.</title>
        <authorList>
            <person name="Carninci P."/>
            <person name="Kasukawa T."/>
            <person name="Katayama S."/>
            <person name="Gough J."/>
            <person name="Frith M.C."/>
            <person name="Maeda N."/>
            <person name="Oyama R."/>
            <person name="Ravasi T."/>
            <person name="Lenhard B."/>
            <person name="Wells C."/>
            <person name="Kodzius R."/>
            <person name="Shimokawa K."/>
            <person name="Bajic V.B."/>
            <person name="Brenner S.E."/>
            <person name="Batalov S."/>
            <person name="Forrest A.R."/>
            <person name="Zavolan M."/>
            <person name="Davis M.J."/>
            <person name="Wilming L.G."/>
            <person name="Aidinis V."/>
            <person name="Allen J.E."/>
            <person name="Ambesi-Impiombato A."/>
            <person name="Apweiler R."/>
            <person name="Aturaliya R.N."/>
            <person name="Bailey T.L."/>
            <person name="Bansal M."/>
            <person name="Baxter L."/>
            <person name="Beisel K.W."/>
            <person name="Bersano T."/>
            <person name="Bono H."/>
            <person name="Chalk A.M."/>
            <person name="Chiu K.P."/>
            <person name="Choudhary V."/>
            <person name="Christoffels A."/>
            <person name="Clutterbuck D.R."/>
            <person name="Crowe M.L."/>
            <person name="Dalla E."/>
            <person name="Dalrymple B.P."/>
            <person name="de Bono B."/>
            <person name="Della Gatta G."/>
            <person name="di Bernardo D."/>
            <person name="Down T."/>
            <person name="Engstrom P."/>
            <person name="Fagiolini M."/>
            <person name="Faulkner G."/>
            <person name="Fletcher C.F."/>
            <person name="Fukushima T."/>
            <person name="Furuno M."/>
            <person name="Futaki S."/>
            <person name="Gariboldi M."/>
            <person name="Georgii-Hemming P."/>
            <person name="Gingeras T.R."/>
            <person name="Gojobori T."/>
            <person name="Green R.E."/>
            <person name="Gustincich S."/>
            <person name="Harbers M."/>
            <person name="Hayashi Y."/>
            <person name="Hensch T.K."/>
            <person name="Hirokawa N."/>
            <person name="Hill D."/>
            <person name="Huminiecki L."/>
            <person name="Iacono M."/>
            <person name="Ikeo K."/>
            <person name="Iwama A."/>
            <person name="Ishikawa T."/>
            <person name="Jakt M."/>
            <person name="Kanapin A."/>
            <person name="Katoh M."/>
            <person name="Kawasawa Y."/>
            <person name="Kelso J."/>
            <person name="Kitamura H."/>
            <person name="Kitano H."/>
            <person name="Kollias G."/>
            <person name="Krishnan S.P."/>
            <person name="Kruger A."/>
            <person name="Kummerfeld S.K."/>
            <person name="Kurochkin I.V."/>
            <person name="Lareau L.F."/>
            <person name="Lazarevic D."/>
            <person name="Lipovich L."/>
            <person name="Liu J."/>
            <person name="Liuni S."/>
            <person name="McWilliam S."/>
            <person name="Madan Babu M."/>
            <person name="Madera M."/>
            <person name="Marchionni L."/>
            <person name="Matsuda H."/>
            <person name="Matsuzawa S."/>
            <person name="Miki H."/>
            <person name="Mignone F."/>
            <person name="Miyake S."/>
            <person name="Morris K."/>
            <person name="Mottagui-Tabar S."/>
            <person name="Mulder N."/>
            <person name="Nakano N."/>
            <person name="Nakauchi H."/>
            <person name="Ng P."/>
            <person name="Nilsson R."/>
            <person name="Nishiguchi S."/>
            <person name="Nishikawa S."/>
            <person name="Nori F."/>
            <person name="Ohara O."/>
            <person name="Okazaki Y."/>
            <person name="Orlando V."/>
            <person name="Pang K.C."/>
            <person name="Pavan W.J."/>
            <person name="Pavesi G."/>
            <person name="Pesole G."/>
            <person name="Petrovsky N."/>
            <person name="Piazza S."/>
            <person name="Reed J."/>
            <person name="Reid J.F."/>
            <person name="Ring B.Z."/>
            <person name="Ringwald M."/>
            <person name="Rost B."/>
            <person name="Ruan Y."/>
            <person name="Salzberg S.L."/>
            <person name="Sandelin A."/>
            <person name="Schneider C."/>
            <person name="Schoenbach C."/>
            <person name="Sekiguchi K."/>
            <person name="Semple C.A."/>
            <person name="Seno S."/>
            <person name="Sessa L."/>
            <person name="Sheng Y."/>
            <person name="Shibata Y."/>
            <person name="Shimada H."/>
            <person name="Shimada K."/>
            <person name="Silva D."/>
            <person name="Sinclair B."/>
            <person name="Sperling S."/>
            <person name="Stupka E."/>
            <person name="Sugiura K."/>
            <person name="Sultana R."/>
            <person name="Takenaka Y."/>
            <person name="Taki K."/>
            <person name="Tammoja K."/>
            <person name="Tan S.L."/>
            <person name="Tang S."/>
            <person name="Taylor M.S."/>
            <person name="Tegner J."/>
            <person name="Teichmann S.A."/>
            <person name="Ueda H.R."/>
            <person name="van Nimwegen E."/>
            <person name="Verardo R."/>
            <person name="Wei C.L."/>
            <person name="Yagi K."/>
            <person name="Yamanishi H."/>
            <person name="Zabarovsky E."/>
            <person name="Zhu S."/>
            <person name="Zimmer A."/>
            <person name="Hide W."/>
            <person name="Bult C."/>
            <person name="Grimmond S.M."/>
            <person name="Teasdale R.D."/>
            <person name="Liu E.T."/>
            <person name="Brusic V."/>
            <person name="Quackenbush J."/>
            <person name="Wahlestedt C."/>
            <person name="Mattick J.S."/>
            <person name="Hume D.A."/>
            <person name="Kai C."/>
            <person name="Sasaki D."/>
            <person name="Tomaru Y."/>
            <person name="Fukuda S."/>
            <person name="Kanamori-Katayama M."/>
            <person name="Suzuki M."/>
            <person name="Aoki J."/>
            <person name="Arakawa T."/>
            <person name="Iida J."/>
            <person name="Imamura K."/>
            <person name="Itoh M."/>
            <person name="Kato T."/>
            <person name="Kawaji H."/>
            <person name="Kawagashira N."/>
            <person name="Kawashima T."/>
            <person name="Kojima M."/>
            <person name="Kondo S."/>
            <person name="Konno H."/>
            <person name="Nakano K."/>
            <person name="Ninomiya N."/>
            <person name="Nishio T."/>
            <person name="Okada M."/>
            <person name="Plessy C."/>
            <person name="Shibata K."/>
            <person name="Shiraki T."/>
            <person name="Suzuki S."/>
            <person name="Tagami M."/>
            <person name="Waki K."/>
            <person name="Watahiki A."/>
            <person name="Okamura-Oho Y."/>
            <person name="Suzuki H."/>
            <person name="Kawai J."/>
            <person name="Hayashizaki Y."/>
        </authorList>
    </citation>
    <scope>NUCLEOTIDE SEQUENCE [LARGE SCALE MRNA]</scope>
    <source>
        <strain>NOD</strain>
    </source>
</reference>
<reference key="2">
    <citation type="journal article" date="2009" name="PLoS Biol.">
        <title>Lineage-specific biology revealed by a finished genome assembly of the mouse.</title>
        <authorList>
            <person name="Church D.M."/>
            <person name="Goodstadt L."/>
            <person name="Hillier L.W."/>
            <person name="Zody M.C."/>
            <person name="Goldstein S."/>
            <person name="She X."/>
            <person name="Bult C.J."/>
            <person name="Agarwala R."/>
            <person name="Cherry J.L."/>
            <person name="DiCuccio M."/>
            <person name="Hlavina W."/>
            <person name="Kapustin Y."/>
            <person name="Meric P."/>
            <person name="Maglott D."/>
            <person name="Birtle Z."/>
            <person name="Marques A.C."/>
            <person name="Graves T."/>
            <person name="Zhou S."/>
            <person name="Teague B."/>
            <person name="Potamousis K."/>
            <person name="Churas C."/>
            <person name="Place M."/>
            <person name="Herschleb J."/>
            <person name="Runnheim R."/>
            <person name="Forrest D."/>
            <person name="Amos-Landgraf J."/>
            <person name="Schwartz D.C."/>
            <person name="Cheng Z."/>
            <person name="Lindblad-Toh K."/>
            <person name="Eichler E.E."/>
            <person name="Ponting C.P."/>
        </authorList>
    </citation>
    <scope>NUCLEOTIDE SEQUENCE [LARGE SCALE GENOMIC DNA]</scope>
    <source>
        <strain>C57BL/6J</strain>
    </source>
</reference>
<reference key="3">
    <citation type="journal article" date="2010" name="Cell">
        <title>A tissue-specific atlas of mouse protein phosphorylation and expression.</title>
        <authorList>
            <person name="Huttlin E.L."/>
            <person name="Jedrychowski M.P."/>
            <person name="Elias J.E."/>
            <person name="Goswami T."/>
            <person name="Rad R."/>
            <person name="Beausoleil S.A."/>
            <person name="Villen J."/>
            <person name="Haas W."/>
            <person name="Sowa M.E."/>
            <person name="Gygi S.P."/>
        </authorList>
    </citation>
    <scope>PHOSPHORYLATION [LARGE SCALE ANALYSIS] AT SER-50</scope>
    <scope>IDENTIFICATION BY MASS SPECTROMETRY [LARGE SCALE ANALYSIS]</scope>
    <source>
        <tissue>Kidney</tissue>
        <tissue>Testis</tissue>
    </source>
</reference>
<proteinExistence type="evidence at protein level"/>
<name>CG057_MOUSE</name>
<gene>
    <name type="primary">Gm11992</name>
</gene>
<protein>
    <recommendedName>
        <fullName>Uncharacterized protein C7orf57 homolog</fullName>
    </recommendedName>
</protein>